<organism>
    <name type="scientific">Acaryochloris marina (strain MBIC 11017)</name>
    <dbReference type="NCBI Taxonomy" id="329726"/>
    <lineage>
        <taxon>Bacteria</taxon>
        <taxon>Bacillati</taxon>
        <taxon>Cyanobacteriota</taxon>
        <taxon>Cyanophyceae</taxon>
        <taxon>Acaryochloridales</taxon>
        <taxon>Acaryochloridaceae</taxon>
        <taxon>Acaryochloris</taxon>
    </lineage>
</organism>
<protein>
    <recommendedName>
        <fullName evidence="1">Diaminopimelate epimerase</fullName>
        <shortName evidence="1">DAP epimerase</shortName>
        <ecNumber evidence="1">5.1.1.7</ecNumber>
    </recommendedName>
    <alternativeName>
        <fullName evidence="1">PLP-independent amino acid racemase</fullName>
    </alternativeName>
</protein>
<sequence>MRVEFTKYQGLGNDFILIDNRHQAQPCLTPDQAVQMCDRNFGIGGDGVIFALPPEGDTDYTMRIYNSDGSEPEMCGNGIRCLARFLAHLEGKPLQTDITYRIHTLAGTITPSLQADGLVKVDMGPPFLVPQEIPTTLGEGTDPVVNQPLEVAGQSWPVTCVSMGNPHCITFVDDLEAIDFQTLGPQFEHHPVFPQRINTEFIQVIRPDYLKMLVWERGAGPTLACGTGACAVLVAGVLTGKSQSQATIELPGGPLQIRWAGEGQSVFMTGPAEKVFTGIYETG</sequence>
<comment type="function">
    <text evidence="1">Catalyzes the stereoinversion of LL-2,6-diaminopimelate (L,L-DAP) to meso-diaminopimelate (meso-DAP), a precursor of L-lysine and an essential component of the bacterial peptidoglycan.</text>
</comment>
<comment type="catalytic activity">
    <reaction evidence="1">
        <text>(2S,6S)-2,6-diaminopimelate = meso-2,6-diaminopimelate</text>
        <dbReference type="Rhea" id="RHEA:15393"/>
        <dbReference type="ChEBI" id="CHEBI:57609"/>
        <dbReference type="ChEBI" id="CHEBI:57791"/>
        <dbReference type="EC" id="5.1.1.7"/>
    </reaction>
</comment>
<comment type="pathway">
    <text evidence="1">Amino-acid biosynthesis; L-lysine biosynthesis via DAP pathway; DL-2,6-diaminopimelate from LL-2,6-diaminopimelate: step 1/1.</text>
</comment>
<comment type="subunit">
    <text evidence="1">Homodimer.</text>
</comment>
<comment type="subcellular location">
    <subcellularLocation>
        <location evidence="1">Cytoplasm</location>
    </subcellularLocation>
</comment>
<comment type="similarity">
    <text evidence="1">Belongs to the diaminopimelate epimerase family.</text>
</comment>
<dbReference type="EC" id="5.1.1.7" evidence="1"/>
<dbReference type="EMBL" id="CP000828">
    <property type="protein sequence ID" value="ABW27359.1"/>
    <property type="molecule type" value="Genomic_DNA"/>
</dbReference>
<dbReference type="RefSeq" id="WP_012162832.1">
    <property type="nucleotide sequence ID" value="NC_009925.1"/>
</dbReference>
<dbReference type="SMR" id="B0C312"/>
<dbReference type="STRING" id="329726.AM1_2349"/>
<dbReference type="KEGG" id="amr:AM1_2349"/>
<dbReference type="eggNOG" id="COG0253">
    <property type="taxonomic scope" value="Bacteria"/>
</dbReference>
<dbReference type="HOGENOM" id="CLU_053306_2_1_3"/>
<dbReference type="OrthoDB" id="9805408at2"/>
<dbReference type="UniPathway" id="UPA00034">
    <property type="reaction ID" value="UER00025"/>
</dbReference>
<dbReference type="Proteomes" id="UP000000268">
    <property type="component" value="Chromosome"/>
</dbReference>
<dbReference type="GO" id="GO:0005829">
    <property type="term" value="C:cytosol"/>
    <property type="evidence" value="ECO:0007669"/>
    <property type="project" value="TreeGrafter"/>
</dbReference>
<dbReference type="GO" id="GO:0008837">
    <property type="term" value="F:diaminopimelate epimerase activity"/>
    <property type="evidence" value="ECO:0007669"/>
    <property type="project" value="UniProtKB-UniRule"/>
</dbReference>
<dbReference type="GO" id="GO:0009089">
    <property type="term" value="P:lysine biosynthetic process via diaminopimelate"/>
    <property type="evidence" value="ECO:0007669"/>
    <property type="project" value="UniProtKB-UniRule"/>
</dbReference>
<dbReference type="FunFam" id="3.10.310.10:FF:000009">
    <property type="entry name" value="Diaminopimelate epimerase chloroplastic"/>
    <property type="match status" value="1"/>
</dbReference>
<dbReference type="FunFam" id="3.10.310.10:FF:000011">
    <property type="entry name" value="Diaminopimelate epimerase, chloroplastic"/>
    <property type="match status" value="1"/>
</dbReference>
<dbReference type="Gene3D" id="3.10.310.10">
    <property type="entry name" value="Diaminopimelate Epimerase, Chain A, domain 1"/>
    <property type="match status" value="2"/>
</dbReference>
<dbReference type="HAMAP" id="MF_00197">
    <property type="entry name" value="DAP_epimerase"/>
    <property type="match status" value="1"/>
</dbReference>
<dbReference type="InterPro" id="IPR018510">
    <property type="entry name" value="DAP_epimerase_AS"/>
</dbReference>
<dbReference type="InterPro" id="IPR001653">
    <property type="entry name" value="DAP_epimerase_DapF"/>
</dbReference>
<dbReference type="NCBIfam" id="TIGR00652">
    <property type="entry name" value="DapF"/>
    <property type="match status" value="1"/>
</dbReference>
<dbReference type="PANTHER" id="PTHR31689:SF0">
    <property type="entry name" value="DIAMINOPIMELATE EPIMERASE"/>
    <property type="match status" value="1"/>
</dbReference>
<dbReference type="PANTHER" id="PTHR31689">
    <property type="entry name" value="DIAMINOPIMELATE EPIMERASE, CHLOROPLASTIC"/>
    <property type="match status" value="1"/>
</dbReference>
<dbReference type="Pfam" id="PF01678">
    <property type="entry name" value="DAP_epimerase"/>
    <property type="match status" value="2"/>
</dbReference>
<dbReference type="SUPFAM" id="SSF54506">
    <property type="entry name" value="Diaminopimelate epimerase-like"/>
    <property type="match status" value="2"/>
</dbReference>
<dbReference type="PROSITE" id="PS01326">
    <property type="entry name" value="DAP_EPIMERASE"/>
    <property type="match status" value="1"/>
</dbReference>
<keyword id="KW-0028">Amino-acid biosynthesis</keyword>
<keyword id="KW-0963">Cytoplasm</keyword>
<keyword id="KW-0413">Isomerase</keyword>
<keyword id="KW-0457">Lysine biosynthesis</keyword>
<keyword id="KW-1185">Reference proteome</keyword>
<evidence type="ECO:0000255" key="1">
    <source>
        <dbReference type="HAMAP-Rule" id="MF_00197"/>
    </source>
</evidence>
<name>DAPF_ACAM1</name>
<feature type="chain" id="PRO_1000077687" description="Diaminopimelate epimerase">
    <location>
        <begin position="1"/>
        <end position="283"/>
    </location>
</feature>
<feature type="active site" description="Proton donor" evidence="1">
    <location>
        <position position="75"/>
    </location>
</feature>
<feature type="active site" description="Proton acceptor" evidence="1">
    <location>
        <position position="225"/>
    </location>
</feature>
<feature type="binding site" evidence="1">
    <location>
        <position position="13"/>
    </location>
    <ligand>
        <name>substrate</name>
    </ligand>
</feature>
<feature type="binding site" evidence="1">
    <location>
        <position position="66"/>
    </location>
    <ligand>
        <name>substrate</name>
    </ligand>
</feature>
<feature type="binding site" evidence="1">
    <location>
        <begin position="76"/>
        <end position="77"/>
    </location>
    <ligand>
        <name>substrate</name>
    </ligand>
</feature>
<feature type="binding site" evidence="1">
    <location>
        <position position="165"/>
    </location>
    <ligand>
        <name>substrate</name>
    </ligand>
</feature>
<feature type="binding site" evidence="1">
    <location>
        <position position="198"/>
    </location>
    <ligand>
        <name>substrate</name>
    </ligand>
</feature>
<feature type="binding site" evidence="1">
    <location>
        <begin position="216"/>
        <end position="217"/>
    </location>
    <ligand>
        <name>substrate</name>
    </ligand>
</feature>
<feature type="binding site" evidence="1">
    <location>
        <begin position="226"/>
        <end position="227"/>
    </location>
    <ligand>
        <name>substrate</name>
    </ligand>
</feature>
<feature type="site" description="Could be important to modulate the pK values of the two catalytic cysteine residues" evidence="1">
    <location>
        <position position="167"/>
    </location>
</feature>
<feature type="site" description="Could be important to modulate the pK values of the two catalytic cysteine residues" evidence="1">
    <location>
        <position position="216"/>
    </location>
</feature>
<gene>
    <name evidence="1" type="primary">dapF</name>
    <name type="ordered locus">AM1_2349</name>
</gene>
<reference key="1">
    <citation type="journal article" date="2008" name="Proc. Natl. Acad. Sci. U.S.A.">
        <title>Niche adaptation and genome expansion in the chlorophyll d-producing cyanobacterium Acaryochloris marina.</title>
        <authorList>
            <person name="Swingley W.D."/>
            <person name="Chen M."/>
            <person name="Cheung P.C."/>
            <person name="Conrad A.L."/>
            <person name="Dejesa L.C."/>
            <person name="Hao J."/>
            <person name="Honchak B.M."/>
            <person name="Karbach L.E."/>
            <person name="Kurdoglu A."/>
            <person name="Lahiri S."/>
            <person name="Mastrian S.D."/>
            <person name="Miyashita H."/>
            <person name="Page L."/>
            <person name="Ramakrishna P."/>
            <person name="Satoh S."/>
            <person name="Sattley W.M."/>
            <person name="Shimada Y."/>
            <person name="Taylor H.L."/>
            <person name="Tomo T."/>
            <person name="Tsuchiya T."/>
            <person name="Wang Z.T."/>
            <person name="Raymond J."/>
            <person name="Mimuro M."/>
            <person name="Blankenship R.E."/>
            <person name="Touchman J.W."/>
        </authorList>
    </citation>
    <scope>NUCLEOTIDE SEQUENCE [LARGE SCALE GENOMIC DNA]</scope>
    <source>
        <strain>MBIC 11017</strain>
    </source>
</reference>
<proteinExistence type="inferred from homology"/>
<accession>B0C312</accession>